<protein>
    <recommendedName>
        <fullName evidence="1">tRNA (guanine-N(7)-)-methyltransferase</fullName>
        <ecNumber evidence="1">2.1.1.33</ecNumber>
    </recommendedName>
    <alternativeName>
        <fullName evidence="1">Transfer RNA methyltransferase 8</fullName>
    </alternativeName>
    <alternativeName>
        <fullName evidence="1">tRNA (guanine(46)-N(7))-methyltransferase</fullName>
    </alternativeName>
    <alternativeName>
        <fullName evidence="1">tRNA(m7G46)-methyltransferase</fullName>
    </alternativeName>
</protein>
<comment type="function">
    <text evidence="1">Catalyzes the formation of N(7)-methylguanine at position 46 (m7G46) in tRNA.</text>
</comment>
<comment type="catalytic activity">
    <reaction evidence="1">
        <text>guanosine(46) in tRNA + S-adenosyl-L-methionine = N(7)-methylguanosine(46) in tRNA + S-adenosyl-L-homocysteine</text>
        <dbReference type="Rhea" id="RHEA:42708"/>
        <dbReference type="Rhea" id="RHEA-COMP:10188"/>
        <dbReference type="Rhea" id="RHEA-COMP:10189"/>
        <dbReference type="ChEBI" id="CHEBI:57856"/>
        <dbReference type="ChEBI" id="CHEBI:59789"/>
        <dbReference type="ChEBI" id="CHEBI:74269"/>
        <dbReference type="ChEBI" id="CHEBI:74480"/>
        <dbReference type="EC" id="2.1.1.33"/>
    </reaction>
</comment>
<comment type="pathway">
    <text evidence="1">tRNA modification; N(7)-methylguanine-tRNA biosynthesis.</text>
</comment>
<comment type="subunit">
    <text evidence="1">Forms a complex with TRM82.</text>
</comment>
<comment type="subcellular location">
    <subcellularLocation>
        <location evidence="1">Nucleus</location>
    </subcellularLocation>
</comment>
<comment type="similarity">
    <text evidence="1">Belongs to the class I-like SAM-binding methyltransferase superfamily. TrmB family.</text>
</comment>
<dbReference type="EC" id="2.1.1.33" evidence="1"/>
<dbReference type="EMBL" id="CP017626">
    <property type="protein sequence ID" value="AOW29224.1"/>
    <property type="molecule type" value="Genomic_DNA"/>
</dbReference>
<dbReference type="RefSeq" id="XP_717203.2">
    <property type="nucleotide sequence ID" value="XM_712110.2"/>
</dbReference>
<dbReference type="SMR" id="Q5A692"/>
<dbReference type="FunCoup" id="Q5A692">
    <property type="interactions" value="564"/>
</dbReference>
<dbReference type="STRING" id="237561.Q5A692"/>
<dbReference type="EnsemblFungi" id="C4_04810C_A-T">
    <property type="protein sequence ID" value="C4_04810C_A-T-p1"/>
    <property type="gene ID" value="C4_04810C_A"/>
</dbReference>
<dbReference type="GeneID" id="3641112"/>
<dbReference type="KEGG" id="cal:CAALFM_C404810CA"/>
<dbReference type="CGD" id="CAL0000183898">
    <property type="gene designation" value="orf19.11279"/>
</dbReference>
<dbReference type="VEuPathDB" id="FungiDB:C4_04810C_A"/>
<dbReference type="eggNOG" id="KOG3115">
    <property type="taxonomic scope" value="Eukaryota"/>
</dbReference>
<dbReference type="HOGENOM" id="CLU_050910_3_1_1"/>
<dbReference type="InParanoid" id="Q5A692"/>
<dbReference type="OrthoDB" id="47276at2759"/>
<dbReference type="UniPathway" id="UPA00989"/>
<dbReference type="PRO" id="PR:Q5A692"/>
<dbReference type="Proteomes" id="UP000000559">
    <property type="component" value="Chromosome 4"/>
</dbReference>
<dbReference type="GO" id="GO:0005634">
    <property type="term" value="C:nucleus"/>
    <property type="evidence" value="ECO:0007669"/>
    <property type="project" value="UniProtKB-SubCell"/>
</dbReference>
<dbReference type="GO" id="GO:0106143">
    <property type="term" value="C:tRNA (m7G46) methyltransferase complex"/>
    <property type="evidence" value="ECO:0007669"/>
    <property type="project" value="EnsemblFungi"/>
</dbReference>
<dbReference type="GO" id="GO:0043527">
    <property type="term" value="C:tRNA methyltransferase complex"/>
    <property type="evidence" value="ECO:0000318"/>
    <property type="project" value="GO_Central"/>
</dbReference>
<dbReference type="GO" id="GO:0008176">
    <property type="term" value="F:tRNA (guanine(46)-N7)-methyltransferase activity"/>
    <property type="evidence" value="ECO:0000318"/>
    <property type="project" value="GO_Central"/>
</dbReference>
<dbReference type="GO" id="GO:0000049">
    <property type="term" value="F:tRNA binding"/>
    <property type="evidence" value="ECO:0007669"/>
    <property type="project" value="UniProtKB-UniRule"/>
</dbReference>
<dbReference type="GO" id="GO:0036265">
    <property type="term" value="P:RNA (guanine-N7)-methylation"/>
    <property type="evidence" value="ECO:0000318"/>
    <property type="project" value="GO_Central"/>
</dbReference>
<dbReference type="GO" id="GO:0030488">
    <property type="term" value="P:tRNA methylation"/>
    <property type="evidence" value="ECO:0000318"/>
    <property type="project" value="GO_Central"/>
</dbReference>
<dbReference type="CDD" id="cd02440">
    <property type="entry name" value="AdoMet_MTases"/>
    <property type="match status" value="1"/>
</dbReference>
<dbReference type="FunFam" id="3.40.50.150:FF:000060">
    <property type="entry name" value="tRNA (guanine-N(7)-)-methyltransferase"/>
    <property type="match status" value="1"/>
</dbReference>
<dbReference type="Gene3D" id="3.40.50.150">
    <property type="entry name" value="Vaccinia Virus protein VP39"/>
    <property type="match status" value="1"/>
</dbReference>
<dbReference type="HAMAP" id="MF_03055">
    <property type="entry name" value="tRNA_methyltr_TrmB_euk"/>
    <property type="match status" value="1"/>
</dbReference>
<dbReference type="InterPro" id="IPR029063">
    <property type="entry name" value="SAM-dependent_MTases_sf"/>
</dbReference>
<dbReference type="InterPro" id="IPR025763">
    <property type="entry name" value="Trm8_euk"/>
</dbReference>
<dbReference type="InterPro" id="IPR003358">
    <property type="entry name" value="tRNA_(Gua-N-7)_MeTrfase_Trmb"/>
</dbReference>
<dbReference type="NCBIfam" id="TIGR00091">
    <property type="entry name" value="tRNA (guanosine(46)-N7)-methyltransferase TrmB"/>
    <property type="match status" value="1"/>
</dbReference>
<dbReference type="PANTHER" id="PTHR23417">
    <property type="entry name" value="3-DEOXY-D-MANNO-OCTULOSONIC-ACID TRANSFERASE/TRNA GUANINE-N 7 - -METHYLTRANSFERASE"/>
    <property type="match status" value="1"/>
</dbReference>
<dbReference type="PANTHER" id="PTHR23417:SF16">
    <property type="entry name" value="TRNA (GUANINE-N(7)-)-METHYLTRANSFERASE"/>
    <property type="match status" value="1"/>
</dbReference>
<dbReference type="Pfam" id="PF02390">
    <property type="entry name" value="Methyltransf_4"/>
    <property type="match status" value="1"/>
</dbReference>
<dbReference type="SUPFAM" id="SSF53335">
    <property type="entry name" value="S-adenosyl-L-methionine-dependent methyltransferases"/>
    <property type="match status" value="1"/>
</dbReference>
<dbReference type="PROSITE" id="PS51625">
    <property type="entry name" value="SAM_MT_TRMB"/>
    <property type="match status" value="1"/>
</dbReference>
<keyword id="KW-0489">Methyltransferase</keyword>
<keyword id="KW-0539">Nucleus</keyword>
<keyword id="KW-1185">Reference proteome</keyword>
<keyword id="KW-0694">RNA-binding</keyword>
<keyword id="KW-0949">S-adenosyl-L-methionine</keyword>
<keyword id="KW-0808">Transferase</keyword>
<keyword id="KW-0819">tRNA processing</keyword>
<keyword id="KW-0820">tRNA-binding</keyword>
<name>TRMB_CANAL</name>
<evidence type="ECO:0000255" key="1">
    <source>
        <dbReference type="HAMAP-Rule" id="MF_03055"/>
    </source>
</evidence>
<evidence type="ECO:0000256" key="2">
    <source>
        <dbReference type="SAM" id="MobiDB-lite"/>
    </source>
</evidence>
<accession>Q5A692</accession>
<accession>A0A1D8PM52</accession>
<feature type="chain" id="PRO_0000370591" description="tRNA (guanine-N(7)-)-methyltransferase">
    <location>
        <begin position="1"/>
        <end position="325"/>
    </location>
</feature>
<feature type="region of interest" description="Disordered" evidence="2">
    <location>
        <begin position="1"/>
        <end position="101"/>
    </location>
</feature>
<feature type="compositionally biased region" description="Polar residues" evidence="2">
    <location>
        <begin position="51"/>
        <end position="69"/>
    </location>
</feature>
<feature type="active site" evidence="1">
    <location>
        <position position="222"/>
    </location>
</feature>
<feature type="binding site" evidence="1">
    <location>
        <position position="122"/>
    </location>
    <ligand>
        <name>S-adenosyl-L-methionine</name>
        <dbReference type="ChEBI" id="CHEBI:59789"/>
    </ligand>
</feature>
<feature type="binding site" evidence="1">
    <location>
        <begin position="145"/>
        <end position="146"/>
    </location>
    <ligand>
        <name>S-adenosyl-L-methionine</name>
        <dbReference type="ChEBI" id="CHEBI:59789"/>
    </ligand>
</feature>
<feature type="binding site" evidence="1">
    <location>
        <begin position="199"/>
        <end position="200"/>
    </location>
    <ligand>
        <name>S-adenosyl-L-methionine</name>
        <dbReference type="ChEBI" id="CHEBI:59789"/>
    </ligand>
</feature>
<feature type="binding site" evidence="1">
    <location>
        <position position="219"/>
    </location>
    <ligand>
        <name>S-adenosyl-L-methionine</name>
        <dbReference type="ChEBI" id="CHEBI:59789"/>
    </ligand>
</feature>
<feature type="binding site" evidence="1">
    <location>
        <begin position="297"/>
        <end position="299"/>
    </location>
    <ligand>
        <name>S-adenosyl-L-methionine</name>
        <dbReference type="ChEBI" id="CHEBI:59789"/>
    </ligand>
</feature>
<sequence>MSEATDKQKQVSAETPLERDLKSKQQSIAATKRKQYRDDKSQIRKQARFEVSTTPEPEQSDSSATTATITELPKKRYYRQRAHSNPFSDHRLEYPKSPESMDWSNLYPKQYDISKVEIADIGCGYGGLMIKLGPQFPKSLILGLEIRVQVTQYVEDRIIALRKNQEIINDKKKKESGGGTGDGDDNDYSYQNIAVLRGNAMKFLPNFFVKGQLSKMFFCFPDPHFKQRKHKARIITNTLLSEYAYVLREGGVVYTITDVEDLHNWMVKHLDEHPLFERLSKEWEDQDKCVEIMYNATEEGQKVTRNKGSKWVACYKRLPSPDDCE</sequence>
<reference key="1">
    <citation type="journal article" date="2004" name="Proc. Natl. Acad. Sci. U.S.A.">
        <title>The diploid genome sequence of Candida albicans.</title>
        <authorList>
            <person name="Jones T."/>
            <person name="Federspiel N.A."/>
            <person name="Chibana H."/>
            <person name="Dungan J."/>
            <person name="Kalman S."/>
            <person name="Magee B.B."/>
            <person name="Newport G."/>
            <person name="Thorstenson Y.R."/>
            <person name="Agabian N."/>
            <person name="Magee P.T."/>
            <person name="Davis R.W."/>
            <person name="Scherer S."/>
        </authorList>
    </citation>
    <scope>NUCLEOTIDE SEQUENCE [LARGE SCALE GENOMIC DNA]</scope>
    <source>
        <strain>SC5314 / ATCC MYA-2876</strain>
    </source>
</reference>
<reference key="2">
    <citation type="journal article" date="2007" name="Genome Biol.">
        <title>Assembly of the Candida albicans genome into sixteen supercontigs aligned on the eight chromosomes.</title>
        <authorList>
            <person name="van het Hoog M."/>
            <person name="Rast T.J."/>
            <person name="Martchenko M."/>
            <person name="Grindle S."/>
            <person name="Dignard D."/>
            <person name="Hogues H."/>
            <person name="Cuomo C."/>
            <person name="Berriman M."/>
            <person name="Scherer S."/>
            <person name="Magee B.B."/>
            <person name="Whiteway M."/>
            <person name="Chibana H."/>
            <person name="Nantel A."/>
            <person name="Magee P.T."/>
        </authorList>
    </citation>
    <scope>GENOME REANNOTATION</scope>
    <source>
        <strain>SC5314 / ATCC MYA-2876</strain>
    </source>
</reference>
<reference key="3">
    <citation type="journal article" date="2013" name="Genome Biol.">
        <title>Assembly of a phased diploid Candida albicans genome facilitates allele-specific measurements and provides a simple model for repeat and indel structure.</title>
        <authorList>
            <person name="Muzzey D."/>
            <person name="Schwartz K."/>
            <person name="Weissman J.S."/>
            <person name="Sherlock G."/>
        </authorList>
    </citation>
    <scope>NUCLEOTIDE SEQUENCE [LARGE SCALE GENOMIC DNA]</scope>
    <scope>GENOME REANNOTATION</scope>
    <source>
        <strain>SC5314 / ATCC MYA-2876</strain>
    </source>
</reference>
<organism>
    <name type="scientific">Candida albicans (strain SC5314 / ATCC MYA-2876)</name>
    <name type="common">Yeast</name>
    <dbReference type="NCBI Taxonomy" id="237561"/>
    <lineage>
        <taxon>Eukaryota</taxon>
        <taxon>Fungi</taxon>
        <taxon>Dikarya</taxon>
        <taxon>Ascomycota</taxon>
        <taxon>Saccharomycotina</taxon>
        <taxon>Pichiomycetes</taxon>
        <taxon>Debaryomycetaceae</taxon>
        <taxon>Candida/Lodderomyces clade</taxon>
        <taxon>Candida</taxon>
    </lineage>
</organism>
<gene>
    <name evidence="1" type="primary">TRM8</name>
    <name type="ordered locus">CAALFM_C404810CA</name>
    <name type="ORF">CaO19.11279</name>
    <name type="ORF">CaO19.3798</name>
</gene>
<proteinExistence type="inferred from homology"/>